<dbReference type="EC" id="1.14.99.60" evidence="1"/>
<dbReference type="EMBL" id="CP000863">
    <property type="protein sequence ID" value="ACC57646.1"/>
    <property type="molecule type" value="Genomic_DNA"/>
</dbReference>
<dbReference type="RefSeq" id="WP_001216787.1">
    <property type="nucleotide sequence ID" value="NZ_CP031380.1"/>
</dbReference>
<dbReference type="SMR" id="B2HTV8"/>
<dbReference type="GeneID" id="92894376"/>
<dbReference type="KEGG" id="abc:ACICU_02334"/>
<dbReference type="HOGENOM" id="CLU_088601_0_0_6"/>
<dbReference type="UniPathway" id="UPA00232"/>
<dbReference type="Proteomes" id="UP000008839">
    <property type="component" value="Chromosome"/>
</dbReference>
<dbReference type="GO" id="GO:0005886">
    <property type="term" value="C:plasma membrane"/>
    <property type="evidence" value="ECO:0007669"/>
    <property type="project" value="UniProtKB-SubCell"/>
</dbReference>
<dbReference type="GO" id="GO:0008682">
    <property type="term" value="F:3-demethoxyubiquinol 3-hydroxylase activity"/>
    <property type="evidence" value="ECO:0007669"/>
    <property type="project" value="UniProtKB-EC"/>
</dbReference>
<dbReference type="GO" id="GO:0046872">
    <property type="term" value="F:metal ion binding"/>
    <property type="evidence" value="ECO:0007669"/>
    <property type="project" value="UniProtKB-KW"/>
</dbReference>
<dbReference type="GO" id="GO:0006744">
    <property type="term" value="P:ubiquinone biosynthetic process"/>
    <property type="evidence" value="ECO:0007669"/>
    <property type="project" value="UniProtKB-UniRule"/>
</dbReference>
<dbReference type="CDD" id="cd01042">
    <property type="entry name" value="DMQH"/>
    <property type="match status" value="1"/>
</dbReference>
<dbReference type="Gene3D" id="1.20.1260.10">
    <property type="match status" value="1"/>
</dbReference>
<dbReference type="HAMAP" id="MF_01658">
    <property type="entry name" value="COQ7"/>
    <property type="match status" value="1"/>
</dbReference>
<dbReference type="InterPro" id="IPR047809">
    <property type="entry name" value="COQ7_proteobact"/>
</dbReference>
<dbReference type="InterPro" id="IPR012347">
    <property type="entry name" value="Ferritin-like"/>
</dbReference>
<dbReference type="InterPro" id="IPR009078">
    <property type="entry name" value="Ferritin-like_SF"/>
</dbReference>
<dbReference type="InterPro" id="IPR011566">
    <property type="entry name" value="Ubq_synth_Coq7"/>
</dbReference>
<dbReference type="NCBIfam" id="NF033656">
    <property type="entry name" value="DMQ_monoox_COQ7"/>
    <property type="match status" value="1"/>
</dbReference>
<dbReference type="PANTHER" id="PTHR11237:SF4">
    <property type="entry name" value="5-DEMETHOXYUBIQUINONE HYDROXYLASE, MITOCHONDRIAL"/>
    <property type="match status" value="1"/>
</dbReference>
<dbReference type="PANTHER" id="PTHR11237">
    <property type="entry name" value="COENZYME Q10 BIOSYNTHESIS PROTEIN 7"/>
    <property type="match status" value="1"/>
</dbReference>
<dbReference type="Pfam" id="PF03232">
    <property type="entry name" value="COQ7"/>
    <property type="match status" value="1"/>
</dbReference>
<dbReference type="SUPFAM" id="SSF47240">
    <property type="entry name" value="Ferritin-like"/>
    <property type="match status" value="1"/>
</dbReference>
<organism>
    <name type="scientific">Acinetobacter baumannii (strain ACICU)</name>
    <dbReference type="NCBI Taxonomy" id="405416"/>
    <lineage>
        <taxon>Bacteria</taxon>
        <taxon>Pseudomonadati</taxon>
        <taxon>Pseudomonadota</taxon>
        <taxon>Gammaproteobacteria</taxon>
        <taxon>Moraxellales</taxon>
        <taxon>Moraxellaceae</taxon>
        <taxon>Acinetobacter</taxon>
        <taxon>Acinetobacter calcoaceticus/baumannii complex</taxon>
    </lineage>
</organism>
<proteinExistence type="inferred from homology"/>
<keyword id="KW-1003">Cell membrane</keyword>
<keyword id="KW-0408">Iron</keyword>
<keyword id="KW-0472">Membrane</keyword>
<keyword id="KW-0479">Metal-binding</keyword>
<keyword id="KW-0503">Monooxygenase</keyword>
<keyword id="KW-0560">Oxidoreductase</keyword>
<keyword id="KW-0831">Ubiquinone biosynthesis</keyword>
<protein>
    <recommendedName>
        <fullName evidence="1">3-demethoxyubiquinol 3-hydroxylase</fullName>
        <shortName evidence="1">DMQ hydroxylase</shortName>
        <ecNumber evidence="1">1.14.99.60</ecNumber>
    </recommendedName>
    <alternativeName>
        <fullName evidence="1">2-nonaprenyl-3-methyl-6-methoxy-1,4-benzoquinol hydroxylase</fullName>
    </alternativeName>
</protein>
<comment type="function">
    <text evidence="1">Catalyzes the hydroxylation of 2-nonaprenyl-3-methyl-6-methoxy-1,4-benzoquinol during ubiquinone biosynthesis.</text>
</comment>
<comment type="catalytic activity">
    <reaction evidence="1">
        <text>a 5-methoxy-2-methyl-3-(all-trans-polyprenyl)benzene-1,4-diol + AH2 + O2 = a 3-demethylubiquinol + A + H2O</text>
        <dbReference type="Rhea" id="RHEA:50908"/>
        <dbReference type="Rhea" id="RHEA-COMP:10859"/>
        <dbReference type="Rhea" id="RHEA-COMP:10914"/>
        <dbReference type="ChEBI" id="CHEBI:13193"/>
        <dbReference type="ChEBI" id="CHEBI:15377"/>
        <dbReference type="ChEBI" id="CHEBI:15379"/>
        <dbReference type="ChEBI" id="CHEBI:17499"/>
        <dbReference type="ChEBI" id="CHEBI:84167"/>
        <dbReference type="ChEBI" id="CHEBI:84422"/>
        <dbReference type="EC" id="1.14.99.60"/>
    </reaction>
</comment>
<comment type="cofactor">
    <cofactor evidence="1">
        <name>Fe cation</name>
        <dbReference type="ChEBI" id="CHEBI:24875"/>
    </cofactor>
    <text evidence="1">Binds 2 iron ions per subunit.</text>
</comment>
<comment type="pathway">
    <text evidence="1">Cofactor biosynthesis; ubiquinone biosynthesis.</text>
</comment>
<comment type="subcellular location">
    <subcellularLocation>
        <location evidence="1">Cell membrane</location>
        <topology evidence="1">Peripheral membrane protein</topology>
    </subcellularLocation>
</comment>
<comment type="similarity">
    <text evidence="1">Belongs to the COQ7 family.</text>
</comment>
<evidence type="ECO:0000255" key="1">
    <source>
        <dbReference type="HAMAP-Rule" id="MF_01658"/>
    </source>
</evidence>
<name>COQ7_ACIBC</name>
<accession>B2HTV8</accession>
<reference key="1">
    <citation type="journal article" date="2008" name="Antimicrob. Agents Chemother.">
        <title>Whole-genome pyrosequencing of an epidemic multidrug-resistant Acinetobacter baumannii strain belonging to the European clone II group.</title>
        <authorList>
            <person name="Iacono M."/>
            <person name="Villa L."/>
            <person name="Fortini D."/>
            <person name="Bordoni R."/>
            <person name="Imperi F."/>
            <person name="Bonnal R.J."/>
            <person name="Sicheritz-Ponten T."/>
            <person name="De Bellis G."/>
            <person name="Visca P."/>
            <person name="Cassone A."/>
            <person name="Carattoli A."/>
        </authorList>
    </citation>
    <scope>NUCLEOTIDE SEQUENCE [LARGE SCALE GENOMIC DNA]</scope>
    <source>
        <strain>ACICU</strain>
    </source>
</reference>
<sequence length="211" mass="23556">MRHYTGIDQLINSFDQALRSLVPGATAAQRQNPAETVEAKLGVEDARHVAGLMRVNHSGEVCAQALYHGQALTAKLPNVRREMQQAAIEEQDHLAWCEDRLKELNSHTSLLNPIWYGLSYGMGALAGIAGDKYSLGFVAETERQVSLHLQDHLNQLPAQDERSRKILEQMNEDELHHRHTALEAGGVELPYAVKITMTAISKLMTKTSYYL</sequence>
<feature type="chain" id="PRO_1000187041" description="3-demethoxyubiquinol 3-hydroxylase">
    <location>
        <begin position="1"/>
        <end position="211"/>
    </location>
</feature>
<feature type="binding site" evidence="1">
    <location>
        <position position="60"/>
    </location>
    <ligand>
        <name>Fe cation</name>
        <dbReference type="ChEBI" id="CHEBI:24875"/>
        <label>1</label>
    </ligand>
</feature>
<feature type="binding site" evidence="1">
    <location>
        <position position="90"/>
    </location>
    <ligand>
        <name>Fe cation</name>
        <dbReference type="ChEBI" id="CHEBI:24875"/>
        <label>1</label>
    </ligand>
</feature>
<feature type="binding site" evidence="1">
    <location>
        <position position="90"/>
    </location>
    <ligand>
        <name>Fe cation</name>
        <dbReference type="ChEBI" id="CHEBI:24875"/>
        <label>2</label>
    </ligand>
</feature>
<feature type="binding site" evidence="1">
    <location>
        <position position="93"/>
    </location>
    <ligand>
        <name>Fe cation</name>
        <dbReference type="ChEBI" id="CHEBI:24875"/>
        <label>1</label>
    </ligand>
</feature>
<feature type="binding site" evidence="1">
    <location>
        <position position="142"/>
    </location>
    <ligand>
        <name>Fe cation</name>
        <dbReference type="ChEBI" id="CHEBI:24875"/>
        <label>2</label>
    </ligand>
</feature>
<feature type="binding site" evidence="1">
    <location>
        <position position="174"/>
    </location>
    <ligand>
        <name>Fe cation</name>
        <dbReference type="ChEBI" id="CHEBI:24875"/>
        <label>1</label>
    </ligand>
</feature>
<feature type="binding site" evidence="1">
    <location>
        <position position="174"/>
    </location>
    <ligand>
        <name>Fe cation</name>
        <dbReference type="ChEBI" id="CHEBI:24875"/>
        <label>2</label>
    </ligand>
</feature>
<feature type="binding site" evidence="1">
    <location>
        <position position="177"/>
    </location>
    <ligand>
        <name>Fe cation</name>
        <dbReference type="ChEBI" id="CHEBI:24875"/>
        <label>2</label>
    </ligand>
</feature>
<gene>
    <name evidence="1" type="primary">coq7</name>
    <name type="ordered locus">ACICU_02334</name>
</gene>